<accession>Q953I4</accession>
<dbReference type="EC" id="7.1.1.2" evidence="1"/>
<dbReference type="EMBL" id="AF348081">
    <property type="protein sequence ID" value="AAK71091.1"/>
    <property type="molecule type" value="Genomic_DNA"/>
</dbReference>
<dbReference type="RefSeq" id="NP_149954.1">
    <property type="nucleotide sequence ID" value="NC_003040.1"/>
</dbReference>
<dbReference type="SMR" id="Q953I4"/>
<dbReference type="GeneID" id="803548"/>
<dbReference type="CTD" id="4540"/>
<dbReference type="GO" id="GO:0005743">
    <property type="term" value="C:mitochondrial inner membrane"/>
    <property type="evidence" value="ECO:0000250"/>
    <property type="project" value="UniProtKB"/>
</dbReference>
<dbReference type="GO" id="GO:0008137">
    <property type="term" value="F:NADH dehydrogenase (ubiquinone) activity"/>
    <property type="evidence" value="ECO:0000250"/>
    <property type="project" value="UniProtKB"/>
</dbReference>
<dbReference type="GO" id="GO:0015990">
    <property type="term" value="P:electron transport coupled proton transport"/>
    <property type="evidence" value="ECO:0007669"/>
    <property type="project" value="TreeGrafter"/>
</dbReference>
<dbReference type="GO" id="GO:0006120">
    <property type="term" value="P:mitochondrial electron transport, NADH to ubiquinone"/>
    <property type="evidence" value="ECO:0000250"/>
    <property type="project" value="UniProtKB"/>
</dbReference>
<dbReference type="GO" id="GO:0032981">
    <property type="term" value="P:mitochondrial respiratory chain complex I assembly"/>
    <property type="evidence" value="ECO:0000250"/>
    <property type="project" value="UniProtKB"/>
</dbReference>
<dbReference type="InterPro" id="IPR010934">
    <property type="entry name" value="NADH_DH_su5_C"/>
</dbReference>
<dbReference type="InterPro" id="IPR018393">
    <property type="entry name" value="NADHpl_OxRdtase_5_subgr"/>
</dbReference>
<dbReference type="InterPro" id="IPR001750">
    <property type="entry name" value="ND/Mrp_TM"/>
</dbReference>
<dbReference type="InterPro" id="IPR003945">
    <property type="entry name" value="NU5C-like"/>
</dbReference>
<dbReference type="InterPro" id="IPR001516">
    <property type="entry name" value="Proton_antipo_N"/>
</dbReference>
<dbReference type="NCBIfam" id="TIGR01974">
    <property type="entry name" value="NDH_I_L"/>
    <property type="match status" value="1"/>
</dbReference>
<dbReference type="PANTHER" id="PTHR42829">
    <property type="entry name" value="NADH-UBIQUINONE OXIDOREDUCTASE CHAIN 5"/>
    <property type="match status" value="1"/>
</dbReference>
<dbReference type="PANTHER" id="PTHR42829:SF2">
    <property type="entry name" value="NADH-UBIQUINONE OXIDOREDUCTASE CHAIN 5"/>
    <property type="match status" value="1"/>
</dbReference>
<dbReference type="Pfam" id="PF06455">
    <property type="entry name" value="NADH5_C"/>
    <property type="match status" value="1"/>
</dbReference>
<dbReference type="Pfam" id="PF00361">
    <property type="entry name" value="Proton_antipo_M"/>
    <property type="match status" value="1"/>
</dbReference>
<dbReference type="Pfam" id="PF00662">
    <property type="entry name" value="Proton_antipo_N"/>
    <property type="match status" value="1"/>
</dbReference>
<dbReference type="PRINTS" id="PR01434">
    <property type="entry name" value="NADHDHGNASE5"/>
</dbReference>
<comment type="function">
    <text evidence="1">Core subunit of the mitochondrial membrane respiratory chain NADH dehydrogenase (Complex I) which catalyzes electron transfer from NADH through the respiratory chain, using ubiquinone as an electron acceptor. Essential for the catalytic activity and assembly of complex I.</text>
</comment>
<comment type="catalytic activity">
    <reaction evidence="1">
        <text>a ubiquinone + NADH + 5 H(+)(in) = a ubiquinol + NAD(+) + 4 H(+)(out)</text>
        <dbReference type="Rhea" id="RHEA:29091"/>
        <dbReference type="Rhea" id="RHEA-COMP:9565"/>
        <dbReference type="Rhea" id="RHEA-COMP:9566"/>
        <dbReference type="ChEBI" id="CHEBI:15378"/>
        <dbReference type="ChEBI" id="CHEBI:16389"/>
        <dbReference type="ChEBI" id="CHEBI:17976"/>
        <dbReference type="ChEBI" id="CHEBI:57540"/>
        <dbReference type="ChEBI" id="CHEBI:57945"/>
        <dbReference type="EC" id="7.1.1.2"/>
    </reaction>
</comment>
<comment type="subunit">
    <text evidence="2">Core subunit of respiratory chain NADH dehydrogenase (Complex I) which is composed of 45 different subunits.</text>
</comment>
<comment type="subcellular location">
    <subcellularLocation>
        <location evidence="2">Mitochondrion inner membrane</location>
        <topology evidence="3">Multi-pass membrane protein</topology>
    </subcellularLocation>
</comment>
<comment type="similarity">
    <text evidence="4">Belongs to the complex I subunit 5 family.</text>
</comment>
<organism>
    <name type="scientific">Pseudosoriculus fumidus</name>
    <name type="common">Taiwanese brown-toothed shrew</name>
    <name type="synonym">Episoriculus fumidus</name>
    <dbReference type="NCBI Taxonomy" id="3371150"/>
    <lineage>
        <taxon>Eukaryota</taxon>
        <taxon>Metazoa</taxon>
        <taxon>Chordata</taxon>
        <taxon>Craniata</taxon>
        <taxon>Vertebrata</taxon>
        <taxon>Euteleostomi</taxon>
        <taxon>Mammalia</taxon>
        <taxon>Eutheria</taxon>
        <taxon>Laurasiatheria</taxon>
        <taxon>Eulipotyphla</taxon>
        <taxon>Soricidae</taxon>
        <taxon>Pseudosoriculus</taxon>
    </lineage>
</organism>
<sequence length="606" mass="68397">MNLFTSTLILSLSMLTIPVLMSLSSIYKSTQYPYYVKTIISYAFFTSLIPTLIFINSGHEAILSNWHWMTIQTVKLSLNFKLDYFSMIFTPVALFVTWSIMEFSMWYMHSDPNMNRFFKYLLMFLITMMILVTANNLFQLFIGWEGVGIMSFLLIGWWYGRADANTAALQAILYNRIGDIGFILAMAWFLFNSNSWELQQIFMLDTNQNLLPLLGLLLAATGKSAQFGLHPWLPSAMEGPTPVSALLHSSTMVVAGIFLLIRFYPLIETNKTMQTLILCMGAITTLFTAICALTQNDIKKIIAFSTSSQLGLMMVTIGINQPHLAFLHICTHAFFKAMLFMCSGSIIHNLNDEQDIRKMGGLYNALPFTTTSLIVGSLALTGTPFLTGFYSKDLIIETANTSYTNAWALLMTLIATSLTAVYSTRILYYSVLGQPRHSTLILINENNPLLINSIKRLLIGSIFAGFIISLNITPMTIPQMTMPTHLKLTALIITLTGFILALEISLMTQNLKLSYPHNYHKFSNMLGYFPIIMHRLIPSTTLMMSQKFSSMLLDLTWMENILPKSISNFQASSSIMVSNQKGLIKLYFLSFLITLIITMLLFNFHA</sequence>
<gene>
    <name type="primary">MT-ND5</name>
    <name type="synonym">MTND5</name>
    <name type="synonym">NADH5</name>
    <name type="synonym">ND5</name>
</gene>
<evidence type="ECO:0000250" key="1">
    <source>
        <dbReference type="UniProtKB" id="P03915"/>
    </source>
</evidence>
<evidence type="ECO:0000250" key="2">
    <source>
        <dbReference type="UniProtKB" id="P03920"/>
    </source>
</evidence>
<evidence type="ECO:0000255" key="3"/>
<evidence type="ECO:0000305" key="4"/>
<protein>
    <recommendedName>
        <fullName>NADH-ubiquinone oxidoreductase chain 5</fullName>
        <ecNumber evidence="1">7.1.1.2</ecNumber>
    </recommendedName>
    <alternativeName>
        <fullName>NADH dehydrogenase subunit 5</fullName>
    </alternativeName>
</protein>
<proteinExistence type="inferred from homology"/>
<feature type="chain" id="PRO_0000118150" description="NADH-ubiquinone oxidoreductase chain 5">
    <location>
        <begin position="1"/>
        <end position="606"/>
    </location>
</feature>
<feature type="transmembrane region" description="Helical" evidence="3">
    <location>
        <begin position="3"/>
        <end position="23"/>
    </location>
</feature>
<feature type="transmembrane region" description="Helical" evidence="3">
    <location>
        <begin position="35"/>
        <end position="55"/>
    </location>
</feature>
<feature type="transmembrane region" description="Helical" evidence="3">
    <location>
        <begin position="87"/>
        <end position="107"/>
    </location>
</feature>
<feature type="transmembrane region" description="Helical" evidence="3">
    <location>
        <begin position="117"/>
        <end position="137"/>
    </location>
</feature>
<feature type="transmembrane region" description="Helical" evidence="3">
    <location>
        <begin position="140"/>
        <end position="160"/>
    </location>
</feature>
<feature type="transmembrane region" description="Helical" evidence="3">
    <location>
        <begin position="171"/>
        <end position="191"/>
    </location>
</feature>
<feature type="transmembrane region" description="Helical" evidence="3">
    <location>
        <begin position="211"/>
        <end position="233"/>
    </location>
</feature>
<feature type="transmembrane region" description="Helical" evidence="3">
    <location>
        <begin position="241"/>
        <end position="261"/>
    </location>
</feature>
<feature type="transmembrane region" description="Helical" evidence="3">
    <location>
        <begin position="273"/>
        <end position="293"/>
    </location>
</feature>
<feature type="transmembrane region" description="Helical" evidence="3">
    <location>
        <begin position="301"/>
        <end position="320"/>
    </location>
</feature>
<feature type="transmembrane region" description="Helical" evidence="3">
    <location>
        <begin position="325"/>
        <end position="347"/>
    </location>
</feature>
<feature type="transmembrane region" description="Helical" evidence="3">
    <location>
        <begin position="366"/>
        <end position="386"/>
    </location>
</feature>
<feature type="transmembrane region" description="Helical" evidence="3">
    <location>
        <begin position="402"/>
        <end position="422"/>
    </location>
</feature>
<feature type="transmembrane region" description="Helical" evidence="3">
    <location>
        <begin position="457"/>
        <end position="477"/>
    </location>
</feature>
<feature type="transmembrane region" description="Helical" evidence="3">
    <location>
        <begin position="488"/>
        <end position="508"/>
    </location>
</feature>
<feature type="transmembrane region" description="Helical" evidence="3">
    <location>
        <begin position="582"/>
        <end position="602"/>
    </location>
</feature>
<reference key="1">
    <citation type="submission" date="2001-02" db="EMBL/GenBank/DDBJ databases">
        <authorList>
            <person name="Lin Y.-H."/>
        </authorList>
    </citation>
    <scope>NUCLEOTIDE SEQUENCE [GENOMIC DNA]</scope>
</reference>
<name>NU5M_PSEFG</name>
<keyword id="KW-0249">Electron transport</keyword>
<keyword id="KW-0472">Membrane</keyword>
<keyword id="KW-0496">Mitochondrion</keyword>
<keyword id="KW-0999">Mitochondrion inner membrane</keyword>
<keyword id="KW-0520">NAD</keyword>
<keyword id="KW-0679">Respiratory chain</keyword>
<keyword id="KW-1278">Translocase</keyword>
<keyword id="KW-0812">Transmembrane</keyword>
<keyword id="KW-1133">Transmembrane helix</keyword>
<keyword id="KW-0813">Transport</keyword>
<keyword id="KW-0830">Ubiquinone</keyword>
<geneLocation type="mitochondrion"/>